<evidence type="ECO:0000250" key="1">
    <source>
        <dbReference type="UniProtKB" id="Q6F4C6"/>
    </source>
</evidence>
<evidence type="ECO:0000255" key="2"/>
<evidence type="ECO:0000269" key="3">
    <source>
    </source>
</evidence>
<evidence type="ECO:0000305" key="4"/>
<name>PMN14_PINMG</name>
<proteinExistence type="evidence at protein level"/>
<dbReference type="EMBL" id="HE610393">
    <property type="protein sequence ID" value="CCE46167.1"/>
    <property type="molecule type" value="mRNA"/>
</dbReference>
<dbReference type="GO" id="GO:0005576">
    <property type="term" value="C:extracellular region"/>
    <property type="evidence" value="ECO:0007669"/>
    <property type="project" value="UniProtKB-SubCell"/>
</dbReference>
<sequence length="123" mass="13977">MRSLLVLLALAACASAQFFIRGGDDDNGFFGDDDNGYYYPRYFPIYNRFPIYRPIYYRPQIYYPIYRPIFGYGGYGYGGYGGYGYGGYGYGGYGYGGYGGYGYNPYSYGGFYRFGDDDNGFDD</sequence>
<comment type="function">
    <text evidence="1">May be involved in calcification of the prismatic layer of the shell.</text>
</comment>
<comment type="subcellular location">
    <subcellularLocation>
        <location evidence="3">Secreted</location>
    </subcellularLocation>
</comment>
<comment type="tissue specificity">
    <text evidence="3">Prismatic layer of shell (at protein level). Expressed primarily in the mantle with highest level in the mantle edge and lower level in the mantle pallium.</text>
</comment>
<reference evidence="4" key="1">
    <citation type="journal article" date="2010" name="BMC Genomics">
        <title>Transcriptome and proteome analysis of Pinctada margaritifera calcifying mantle and shell: focus on biomineralization.</title>
        <authorList>
            <person name="Joubert C."/>
            <person name="Piquemal D."/>
            <person name="Marie B."/>
            <person name="Manchon L."/>
            <person name="Pierrat F."/>
            <person name="Zanella-Cleon I."/>
            <person name="Cochennec-Laureau N."/>
            <person name="Gueguen Y."/>
            <person name="Montagnani C."/>
        </authorList>
    </citation>
    <scope>NUCLEOTIDE SEQUENCE [MRNA]</scope>
    <scope>IDENTIFICATION</scope>
    <source>
        <tissue>Mantle</tissue>
    </source>
</reference>
<reference key="2">
    <citation type="journal article" date="2012" name="Proc. Natl. Acad. Sci. U.S.A.">
        <title>Different secretory repertoires control the biomineralization processes of prism and nacre deposition of the pearl oyster shell.</title>
        <authorList>
            <person name="Marie B."/>
            <person name="Joubert C."/>
            <person name="Tayale A."/>
            <person name="Zanella-Cleon I."/>
            <person name="Belliard C."/>
            <person name="Piquemal D."/>
            <person name="Cochennec-Laureau N."/>
            <person name="Marin F."/>
            <person name="Gueguen Y."/>
            <person name="Montagnani C."/>
        </authorList>
    </citation>
    <scope>PROTEIN SEQUENCE OF 49-58</scope>
    <scope>SUBCELLULAR LOCATION</scope>
    <scope>TISSUE SPECIFICITY</scope>
    <source>
        <tissue>Shell</tissue>
    </source>
</reference>
<keyword id="KW-0903">Direct protein sequencing</keyword>
<keyword id="KW-0964">Secreted</keyword>
<keyword id="KW-0732">Signal</keyword>
<feature type="signal peptide" evidence="2">
    <location>
        <begin position="1"/>
        <end position="16"/>
    </location>
</feature>
<feature type="chain" id="PRO_0000418020" description="Prismalin-14" evidence="2">
    <location>
        <begin position="17"/>
        <end position="123"/>
    </location>
</feature>
<organism>
    <name type="scientific">Margaritifera margaritifera</name>
    <name type="common">Freshwater pearl mussel</name>
    <dbReference type="NCBI Taxonomy" id="102329"/>
    <lineage>
        <taxon>Eukaryota</taxon>
        <taxon>Metazoa</taxon>
        <taxon>Spiralia</taxon>
        <taxon>Lophotrochozoa</taxon>
        <taxon>Mollusca</taxon>
        <taxon>Bivalvia</taxon>
        <taxon>Autobranchia</taxon>
        <taxon>Pteriomorphia</taxon>
        <taxon>Pterioida</taxon>
        <taxon>Pterioidea</taxon>
        <taxon>Pteriidae</taxon>
        <taxon>Pinctada</taxon>
    </lineage>
</organism>
<protein>
    <recommendedName>
        <fullName>Prismalin-14</fullName>
    </recommendedName>
</protein>
<accession>H2A0M6</accession>